<organism>
    <name type="scientific">Salmonella typhimurium (strain LT2 / SGSC1412 / ATCC 700720)</name>
    <dbReference type="NCBI Taxonomy" id="99287"/>
    <lineage>
        <taxon>Bacteria</taxon>
        <taxon>Pseudomonadati</taxon>
        <taxon>Pseudomonadota</taxon>
        <taxon>Gammaproteobacteria</taxon>
        <taxon>Enterobacterales</taxon>
        <taxon>Enterobacteriaceae</taxon>
        <taxon>Salmonella</taxon>
    </lineage>
</organism>
<reference key="1">
    <citation type="journal article" date="2001" name="Nature">
        <title>Complete genome sequence of Salmonella enterica serovar Typhimurium LT2.</title>
        <authorList>
            <person name="McClelland M."/>
            <person name="Sanderson K.E."/>
            <person name="Spieth J."/>
            <person name="Clifton S.W."/>
            <person name="Latreille P."/>
            <person name="Courtney L."/>
            <person name="Porwollik S."/>
            <person name="Ali J."/>
            <person name="Dante M."/>
            <person name="Du F."/>
            <person name="Hou S."/>
            <person name="Layman D."/>
            <person name="Leonard S."/>
            <person name="Nguyen C."/>
            <person name="Scott K."/>
            <person name="Holmes A."/>
            <person name="Grewal N."/>
            <person name="Mulvaney E."/>
            <person name="Ryan E."/>
            <person name="Sun H."/>
            <person name="Florea L."/>
            <person name="Miller W."/>
            <person name="Stoneking T."/>
            <person name="Nhan M."/>
            <person name="Waterston R."/>
            <person name="Wilson R.K."/>
        </authorList>
    </citation>
    <scope>NUCLEOTIDE SEQUENCE [LARGE SCALE GENOMIC DNA]</scope>
    <source>
        <strain>LT2 / SGSC1412 / ATCC 700720</strain>
    </source>
</reference>
<dbReference type="EC" id="5.3.3.2" evidence="1"/>
<dbReference type="EMBL" id="AE006468">
    <property type="protein sequence ID" value="AAL21914.1"/>
    <property type="molecule type" value="Genomic_DNA"/>
</dbReference>
<dbReference type="RefSeq" id="NP_461955.1">
    <property type="nucleotide sequence ID" value="NC_003197.2"/>
</dbReference>
<dbReference type="RefSeq" id="WP_000133994.1">
    <property type="nucleotide sequence ID" value="NC_003197.2"/>
</dbReference>
<dbReference type="PDB" id="3HYQ">
    <property type="method" value="X-ray"/>
    <property type="resolution" value="1.52 A"/>
    <property type="chains" value="A=1-181"/>
</dbReference>
<dbReference type="PDBsum" id="3HYQ"/>
<dbReference type="SMR" id="Q8ZM82"/>
<dbReference type="STRING" id="99287.STM3039"/>
<dbReference type="PaxDb" id="99287-STM3039"/>
<dbReference type="GeneID" id="1254562"/>
<dbReference type="KEGG" id="stm:STM3039"/>
<dbReference type="PATRIC" id="fig|99287.12.peg.3219"/>
<dbReference type="HOGENOM" id="CLU_060552_2_0_6"/>
<dbReference type="OMA" id="LRLCPWF"/>
<dbReference type="PhylomeDB" id="Q8ZM82"/>
<dbReference type="BioCyc" id="SENT99287:STM3039-MONOMER"/>
<dbReference type="UniPathway" id="UPA00059">
    <property type="reaction ID" value="UER00104"/>
</dbReference>
<dbReference type="EvolutionaryTrace" id="Q8ZM82"/>
<dbReference type="Proteomes" id="UP000001014">
    <property type="component" value="Chromosome"/>
</dbReference>
<dbReference type="GO" id="GO:0005737">
    <property type="term" value="C:cytoplasm"/>
    <property type="evidence" value="ECO:0007669"/>
    <property type="project" value="UniProtKB-SubCell"/>
</dbReference>
<dbReference type="GO" id="GO:0004452">
    <property type="term" value="F:isopentenyl-diphosphate delta-isomerase activity"/>
    <property type="evidence" value="ECO:0007669"/>
    <property type="project" value="UniProtKB-UniRule"/>
</dbReference>
<dbReference type="GO" id="GO:0046872">
    <property type="term" value="F:metal ion binding"/>
    <property type="evidence" value="ECO:0007669"/>
    <property type="project" value="UniProtKB-KW"/>
</dbReference>
<dbReference type="GO" id="GO:0050992">
    <property type="term" value="P:dimethylallyl diphosphate biosynthetic process"/>
    <property type="evidence" value="ECO:0007669"/>
    <property type="project" value="UniProtKB-UniRule"/>
</dbReference>
<dbReference type="GO" id="GO:0008299">
    <property type="term" value="P:isoprenoid biosynthetic process"/>
    <property type="evidence" value="ECO:0007669"/>
    <property type="project" value="UniProtKB-KW"/>
</dbReference>
<dbReference type="CDD" id="cd02885">
    <property type="entry name" value="NUDIX_IPP_Isomerase"/>
    <property type="match status" value="1"/>
</dbReference>
<dbReference type="FunFam" id="3.90.79.10:FF:000009">
    <property type="entry name" value="Isopentenyl-diphosphate Delta-isomerase"/>
    <property type="match status" value="1"/>
</dbReference>
<dbReference type="Gene3D" id="3.90.79.10">
    <property type="entry name" value="Nucleoside Triphosphate Pyrophosphohydrolase"/>
    <property type="match status" value="1"/>
</dbReference>
<dbReference type="HAMAP" id="MF_00202">
    <property type="entry name" value="Idi"/>
    <property type="match status" value="1"/>
</dbReference>
<dbReference type="InterPro" id="IPR056375">
    <property type="entry name" value="Idi_bact"/>
</dbReference>
<dbReference type="InterPro" id="IPR011876">
    <property type="entry name" value="IsopentenylPP_isomerase_typ1"/>
</dbReference>
<dbReference type="InterPro" id="IPR015797">
    <property type="entry name" value="NUDIX_hydrolase-like_dom_sf"/>
</dbReference>
<dbReference type="InterPro" id="IPR000086">
    <property type="entry name" value="NUDIX_hydrolase_dom"/>
</dbReference>
<dbReference type="NCBIfam" id="TIGR02150">
    <property type="entry name" value="IPP_isom_1"/>
    <property type="match status" value="1"/>
</dbReference>
<dbReference type="NCBIfam" id="NF002995">
    <property type="entry name" value="PRK03759.1"/>
    <property type="match status" value="1"/>
</dbReference>
<dbReference type="PANTHER" id="PTHR10885">
    <property type="entry name" value="ISOPENTENYL-DIPHOSPHATE DELTA-ISOMERASE"/>
    <property type="match status" value="1"/>
</dbReference>
<dbReference type="PANTHER" id="PTHR10885:SF0">
    <property type="entry name" value="ISOPENTENYL-DIPHOSPHATE DELTA-ISOMERASE"/>
    <property type="match status" value="1"/>
</dbReference>
<dbReference type="Pfam" id="PF00293">
    <property type="entry name" value="NUDIX"/>
    <property type="match status" value="1"/>
</dbReference>
<dbReference type="PIRSF" id="PIRSF018427">
    <property type="entry name" value="Isopntndiph_ism"/>
    <property type="match status" value="1"/>
</dbReference>
<dbReference type="SUPFAM" id="SSF55811">
    <property type="entry name" value="Nudix"/>
    <property type="match status" value="1"/>
</dbReference>
<dbReference type="PROSITE" id="PS51462">
    <property type="entry name" value="NUDIX"/>
    <property type="match status" value="1"/>
</dbReference>
<evidence type="ECO:0000255" key="1">
    <source>
        <dbReference type="HAMAP-Rule" id="MF_00202"/>
    </source>
</evidence>
<evidence type="ECO:0007829" key="2">
    <source>
        <dbReference type="PDB" id="3HYQ"/>
    </source>
</evidence>
<proteinExistence type="evidence at protein level"/>
<name>IDI_SALTY</name>
<gene>
    <name evidence="1" type="primary">idi</name>
    <name type="ordered locus">STM3039</name>
</gene>
<sequence>MTEEHVVLLDEQDKPSGTLEKYAAHTLNTPLHLAFSCWLFNEDGQLLVTRRSLSKKAWPGVWTNSVCGHPQQGETTEEAIIRRCRFELGVEITDLTPVYPHFSYRATDPNGIVENEVCPVFAARATSVLQVNSEEVMDYQWSEFKSVWKSLLATPWAFSPWMVMQASDEQARERLLNYCQR</sequence>
<keyword id="KW-0002">3D-structure</keyword>
<keyword id="KW-0963">Cytoplasm</keyword>
<keyword id="KW-0413">Isomerase</keyword>
<keyword id="KW-0414">Isoprene biosynthesis</keyword>
<keyword id="KW-0460">Magnesium</keyword>
<keyword id="KW-0464">Manganese</keyword>
<keyword id="KW-0479">Metal-binding</keyword>
<keyword id="KW-1185">Reference proteome</keyword>
<comment type="function">
    <text evidence="1">Catalyzes the 1,3-allylic rearrangement of the homoallylic substrate isopentenyl (IPP) to its highly electrophilic allylic isomer, dimethylallyl diphosphate (DMAPP).</text>
</comment>
<comment type="catalytic activity">
    <reaction evidence="1">
        <text>isopentenyl diphosphate = dimethylallyl diphosphate</text>
        <dbReference type="Rhea" id="RHEA:23284"/>
        <dbReference type="ChEBI" id="CHEBI:57623"/>
        <dbReference type="ChEBI" id="CHEBI:128769"/>
        <dbReference type="EC" id="5.3.3.2"/>
    </reaction>
</comment>
<comment type="cofactor">
    <cofactor evidence="1">
        <name>Mg(2+)</name>
        <dbReference type="ChEBI" id="CHEBI:18420"/>
    </cofactor>
    <text evidence="1">Binds 1 Mg(2+) ion per subunit. The magnesium ion binds only when substrate is bound.</text>
</comment>
<comment type="cofactor">
    <cofactor evidence="1">
        <name>Mn(2+)</name>
        <dbReference type="ChEBI" id="CHEBI:29035"/>
    </cofactor>
    <text evidence="1">Binds 1 Mn(2+) ion per subunit.</text>
</comment>
<comment type="pathway">
    <text evidence="1">Isoprenoid biosynthesis; dimethylallyl diphosphate biosynthesis; dimethylallyl diphosphate from isopentenyl diphosphate: step 1/1.</text>
</comment>
<comment type="subunit">
    <text evidence="1">Homodimer.</text>
</comment>
<comment type="subcellular location">
    <subcellularLocation>
        <location evidence="1">Cytoplasm</location>
    </subcellularLocation>
</comment>
<comment type="similarity">
    <text evidence="1">Belongs to the IPP isomerase type 1 family.</text>
</comment>
<feature type="chain" id="PRO_0000205265" description="Isopentenyl-diphosphate Delta-isomerase">
    <location>
        <begin position="1"/>
        <end position="181"/>
    </location>
</feature>
<feature type="domain" description="Nudix hydrolase">
    <location>
        <begin position="30"/>
        <end position="164"/>
    </location>
</feature>
<feature type="active site" evidence="1">
    <location>
        <position position="67"/>
    </location>
</feature>
<feature type="active site" evidence="1">
    <location>
        <position position="116"/>
    </location>
</feature>
<feature type="binding site" evidence="1">
    <location>
        <position position="25"/>
    </location>
    <ligand>
        <name>Mn(2+)</name>
        <dbReference type="ChEBI" id="CHEBI:29035"/>
    </ligand>
</feature>
<feature type="binding site" evidence="1">
    <location>
        <position position="32"/>
    </location>
    <ligand>
        <name>Mn(2+)</name>
        <dbReference type="ChEBI" id="CHEBI:29035"/>
    </ligand>
</feature>
<feature type="binding site" evidence="1">
    <location>
        <position position="67"/>
    </location>
    <ligand>
        <name>Mg(2+)</name>
        <dbReference type="ChEBI" id="CHEBI:18420"/>
    </ligand>
</feature>
<feature type="binding site" evidence="1">
    <location>
        <position position="69"/>
    </location>
    <ligand>
        <name>Mn(2+)</name>
        <dbReference type="ChEBI" id="CHEBI:29035"/>
    </ligand>
</feature>
<feature type="binding site" evidence="1">
    <location>
        <position position="87"/>
    </location>
    <ligand>
        <name>Mg(2+)</name>
        <dbReference type="ChEBI" id="CHEBI:18420"/>
    </ligand>
</feature>
<feature type="binding site" evidence="1">
    <location>
        <position position="114"/>
    </location>
    <ligand>
        <name>Mn(2+)</name>
        <dbReference type="ChEBI" id="CHEBI:29035"/>
    </ligand>
</feature>
<feature type="binding site" evidence="1">
    <location>
        <position position="116"/>
    </location>
    <ligand>
        <name>Mn(2+)</name>
        <dbReference type="ChEBI" id="CHEBI:29035"/>
    </ligand>
</feature>
<feature type="strand" evidence="2">
    <location>
        <begin position="35"/>
        <end position="40"/>
    </location>
</feature>
<feature type="strand" evidence="2">
    <location>
        <begin position="46"/>
        <end position="51"/>
    </location>
</feature>
<feature type="strand" evidence="2">
    <location>
        <begin position="56"/>
        <end position="58"/>
    </location>
</feature>
<feature type="strand" evidence="2">
    <location>
        <begin position="62"/>
        <end position="68"/>
    </location>
</feature>
<feature type="helix" evidence="2">
    <location>
        <begin position="76"/>
        <end position="88"/>
    </location>
</feature>
<feature type="strand" evidence="2">
    <location>
        <begin position="92"/>
        <end position="99"/>
    </location>
</feature>
<feature type="strand" evidence="2">
    <location>
        <begin position="103"/>
        <end position="107"/>
    </location>
</feature>
<feature type="strand" evidence="2">
    <location>
        <begin position="113"/>
        <end position="117"/>
    </location>
</feature>
<feature type="strand" evidence="2">
    <location>
        <begin position="120"/>
        <end position="125"/>
    </location>
</feature>
<feature type="turn" evidence="2">
    <location>
        <begin position="133"/>
        <end position="135"/>
    </location>
</feature>
<feature type="strand" evidence="2">
    <location>
        <begin position="136"/>
        <end position="142"/>
    </location>
</feature>
<feature type="helix" evidence="2">
    <location>
        <begin position="144"/>
        <end position="153"/>
    </location>
</feature>
<feature type="helix" evidence="2">
    <location>
        <begin position="155"/>
        <end position="157"/>
    </location>
</feature>
<feature type="helix" evidence="2">
    <location>
        <begin position="160"/>
        <end position="166"/>
    </location>
</feature>
<feature type="helix" evidence="2">
    <location>
        <begin position="169"/>
        <end position="176"/>
    </location>
</feature>
<feature type="turn" evidence="2">
    <location>
        <begin position="177"/>
        <end position="180"/>
    </location>
</feature>
<protein>
    <recommendedName>
        <fullName evidence="1">Isopentenyl-diphosphate Delta-isomerase</fullName>
        <shortName evidence="1">IPP isomerase</shortName>
        <ecNumber evidence="1">5.3.3.2</ecNumber>
    </recommendedName>
    <alternativeName>
        <fullName evidence="1">IPP:DMAPP isomerase</fullName>
    </alternativeName>
    <alternativeName>
        <fullName evidence="1">Isopentenyl pyrophosphate isomerase</fullName>
    </alternativeName>
</protein>
<accession>Q8ZM82</accession>